<sequence length="219" mass="24734">MRSTYLREYKLVVVGDGGVGKSALTIQLIQSHFVDEYDPTIEDSYRKKCEIDGEGALLDVLDTAGQEEYSAMREQYMRTGEGFLLVYNITSRSSFDEISTFYQQILRVKDKDTFPVVLVANKCDLEAERVVSRAEGEQLAKSMHCLYVETSAKLRLNVEEAFYSLVRTIRRYNKSEEKGFQNKQAVQTAQVPASTAKRASAVNNSKTEDEVSTKCCVIC</sequence>
<accession>P08647</accession>
<accession>O13806</accession>
<proteinExistence type="evidence at protein level"/>
<name>RAS_SCHPO</name>
<feature type="chain" id="PRO_0000082678" description="Ras-like protein 1">
    <location>
        <begin position="1"/>
        <end position="216"/>
    </location>
</feature>
<feature type="propeptide" id="PRO_0000281333" description="Removed in mature form" evidence="1">
    <location>
        <begin position="217"/>
        <end position="219"/>
    </location>
</feature>
<feature type="short sequence motif" description="Effector region">
    <location>
        <begin position="37"/>
        <end position="45"/>
    </location>
</feature>
<feature type="binding site" evidence="1">
    <location>
        <begin position="15"/>
        <end position="22"/>
    </location>
    <ligand>
        <name>GTP</name>
        <dbReference type="ChEBI" id="CHEBI:37565"/>
    </ligand>
</feature>
<feature type="binding site" evidence="1">
    <location>
        <begin position="62"/>
        <end position="66"/>
    </location>
    <ligand>
        <name>GTP</name>
        <dbReference type="ChEBI" id="CHEBI:37565"/>
    </ligand>
</feature>
<feature type="binding site" evidence="1">
    <location>
        <begin position="121"/>
        <end position="124"/>
    </location>
    <ligand>
        <name>GTP</name>
        <dbReference type="ChEBI" id="CHEBI:37565"/>
    </ligand>
</feature>
<feature type="modified residue" description="Cysteine methyl ester" evidence="1">
    <location>
        <position position="216"/>
    </location>
</feature>
<feature type="lipid moiety-binding region" description="S-farnesyl cysteine" evidence="1">
    <location>
        <position position="216"/>
    </location>
</feature>
<feature type="sequence conflict" description="In Ref. 3; CAA27399." evidence="4" ref="3">
    <original>L</original>
    <variation>M</variation>
    <location>
        <position position="6"/>
    </location>
</feature>
<feature type="sequence conflict" description="In Ref. 1; CAA26191." evidence="4" ref="1">
    <original>L</original>
    <variation>V</variation>
    <location>
        <position position="57"/>
    </location>
</feature>
<feature type="sequence conflict" description="In Ref. 1; CAA26191." evidence="4" ref="1">
    <original>V</original>
    <variation>L</variation>
    <location>
        <position position="60"/>
    </location>
</feature>
<feature type="sequence conflict" description="In Ref. 1; CAA26191." evidence="4" ref="1">
    <original>E</original>
    <variation>Q</variation>
    <location>
        <position position="81"/>
    </location>
</feature>
<feature type="sequence conflict" description="In Ref. 1; CAA26191." evidence="4" ref="1">
    <original>AEG</original>
    <variation>RER</variation>
    <location>
        <begin position="134"/>
        <end position="136"/>
    </location>
</feature>
<feature type="sequence conflict" description="In Ref. 1; CAA26191." evidence="4" ref="1">
    <original>Q</original>
    <variation>H</variation>
    <location>
        <position position="181"/>
    </location>
</feature>
<feature type="sequence conflict" description="In Ref. 1; CAA26191." evidence="4" ref="1">
    <original>T</original>
    <variation>I</variation>
    <location>
        <position position="188"/>
    </location>
</feature>
<evidence type="ECO:0000250" key="1"/>
<evidence type="ECO:0000250" key="2">
    <source>
        <dbReference type="UniProtKB" id="P01112"/>
    </source>
</evidence>
<evidence type="ECO:0000269" key="3">
    <source>
    </source>
</evidence>
<evidence type="ECO:0000305" key="4"/>
<reference key="1">
    <citation type="journal article" date="1985" name="EMBO J.">
        <title>Molecular cloning and sequence analysis of a ras gene from Schizosaccharomyces pombe.</title>
        <authorList>
            <person name="Fukui Y."/>
            <person name="Kaziro Y."/>
        </authorList>
    </citation>
    <scope>NUCLEOTIDE SEQUENCE [GENOMIC DNA]</scope>
    <source>
        <strain>JY282</strain>
    </source>
</reference>
<reference key="2">
    <citation type="submission" date="1985-08" db="EMBL/GenBank/DDBJ databases">
        <authorList>
            <person name="Kaziro Y."/>
        </authorList>
    </citation>
    <scope>SEQUENCE REVISION</scope>
</reference>
<reference key="3">
    <citation type="journal article" date="1986" name="J. Mol. Evol.">
        <title>The cloning and characterization of a RAS gene from Schizosaccharomyces pombe.</title>
        <authorList>
            <person name="Nadin-Davis S.A."/>
            <person name="Yang R.C.A."/>
            <person name="Narang S.A."/>
            <person name="Nasim A."/>
        </authorList>
    </citation>
    <scope>NUCLEOTIDE SEQUENCE [GENOMIC DNA]</scope>
</reference>
<reference key="4">
    <citation type="journal article" date="2002" name="Nature">
        <title>The genome sequence of Schizosaccharomyces pombe.</title>
        <authorList>
            <person name="Wood V."/>
            <person name="Gwilliam R."/>
            <person name="Rajandream M.A."/>
            <person name="Lyne M.H."/>
            <person name="Lyne R."/>
            <person name="Stewart A."/>
            <person name="Sgouros J.G."/>
            <person name="Peat N."/>
            <person name="Hayles J."/>
            <person name="Baker S.G."/>
            <person name="Basham D."/>
            <person name="Bowman S."/>
            <person name="Brooks K."/>
            <person name="Brown D."/>
            <person name="Brown S."/>
            <person name="Chillingworth T."/>
            <person name="Churcher C.M."/>
            <person name="Collins M."/>
            <person name="Connor R."/>
            <person name="Cronin A."/>
            <person name="Davis P."/>
            <person name="Feltwell T."/>
            <person name="Fraser A."/>
            <person name="Gentles S."/>
            <person name="Goble A."/>
            <person name="Hamlin N."/>
            <person name="Harris D.E."/>
            <person name="Hidalgo J."/>
            <person name="Hodgson G."/>
            <person name="Holroyd S."/>
            <person name="Hornsby T."/>
            <person name="Howarth S."/>
            <person name="Huckle E.J."/>
            <person name="Hunt S."/>
            <person name="Jagels K."/>
            <person name="James K.D."/>
            <person name="Jones L."/>
            <person name="Jones M."/>
            <person name="Leather S."/>
            <person name="McDonald S."/>
            <person name="McLean J."/>
            <person name="Mooney P."/>
            <person name="Moule S."/>
            <person name="Mungall K.L."/>
            <person name="Murphy L.D."/>
            <person name="Niblett D."/>
            <person name="Odell C."/>
            <person name="Oliver K."/>
            <person name="O'Neil S."/>
            <person name="Pearson D."/>
            <person name="Quail M.A."/>
            <person name="Rabbinowitsch E."/>
            <person name="Rutherford K.M."/>
            <person name="Rutter S."/>
            <person name="Saunders D."/>
            <person name="Seeger K."/>
            <person name="Sharp S."/>
            <person name="Skelton J."/>
            <person name="Simmonds M.N."/>
            <person name="Squares R."/>
            <person name="Squares S."/>
            <person name="Stevens K."/>
            <person name="Taylor K."/>
            <person name="Taylor R.G."/>
            <person name="Tivey A."/>
            <person name="Walsh S.V."/>
            <person name="Warren T."/>
            <person name="Whitehead S."/>
            <person name="Woodward J.R."/>
            <person name="Volckaert G."/>
            <person name="Aert R."/>
            <person name="Robben J."/>
            <person name="Grymonprez B."/>
            <person name="Weltjens I."/>
            <person name="Vanstreels E."/>
            <person name="Rieger M."/>
            <person name="Schaefer M."/>
            <person name="Mueller-Auer S."/>
            <person name="Gabel C."/>
            <person name="Fuchs M."/>
            <person name="Duesterhoeft A."/>
            <person name="Fritzc C."/>
            <person name="Holzer E."/>
            <person name="Moestl D."/>
            <person name="Hilbert H."/>
            <person name="Borzym K."/>
            <person name="Langer I."/>
            <person name="Beck A."/>
            <person name="Lehrach H."/>
            <person name="Reinhardt R."/>
            <person name="Pohl T.M."/>
            <person name="Eger P."/>
            <person name="Zimmermann W."/>
            <person name="Wedler H."/>
            <person name="Wambutt R."/>
            <person name="Purnelle B."/>
            <person name="Goffeau A."/>
            <person name="Cadieu E."/>
            <person name="Dreano S."/>
            <person name="Gloux S."/>
            <person name="Lelaure V."/>
            <person name="Mottier S."/>
            <person name="Galibert F."/>
            <person name="Aves S.J."/>
            <person name="Xiang Z."/>
            <person name="Hunt C."/>
            <person name="Moore K."/>
            <person name="Hurst S.M."/>
            <person name="Lucas M."/>
            <person name="Rochet M."/>
            <person name="Gaillardin C."/>
            <person name="Tallada V.A."/>
            <person name="Garzon A."/>
            <person name="Thode G."/>
            <person name="Daga R.R."/>
            <person name="Cruzado L."/>
            <person name="Jimenez J."/>
            <person name="Sanchez M."/>
            <person name="del Rey F."/>
            <person name="Benito J."/>
            <person name="Dominguez A."/>
            <person name="Revuelta J.L."/>
            <person name="Moreno S."/>
            <person name="Armstrong J."/>
            <person name="Forsburg S.L."/>
            <person name="Cerutti L."/>
            <person name="Lowe T."/>
            <person name="McCombie W.R."/>
            <person name="Paulsen I."/>
            <person name="Potashkin J."/>
            <person name="Shpakovski G.V."/>
            <person name="Ussery D."/>
            <person name="Barrell B.G."/>
            <person name="Nurse P."/>
        </authorList>
    </citation>
    <scope>NUCLEOTIDE SEQUENCE [LARGE SCALE GENOMIC DNA]</scope>
    <source>
        <strain>972 / ATCC 24843</strain>
    </source>
</reference>
<reference key="5">
    <citation type="journal article" date="2013" name="PLoS Biol.">
        <title>Quantitative control of protein S-palmitoylation regulates meiotic entry in fission yeast.</title>
        <authorList>
            <person name="Zhang M.M."/>
            <person name="Wu P.Y."/>
            <person name="Kelly F.D."/>
            <person name="Nurse P."/>
            <person name="Hang H.C."/>
        </authorList>
    </citation>
    <scope>PALMITOYLATION</scope>
</reference>
<protein>
    <recommendedName>
        <fullName>Ras-like protein 1</fullName>
        <ecNumber evidence="2">3.6.5.2</ecNumber>
    </recommendedName>
</protein>
<keyword id="KW-1003">Cell membrane</keyword>
<keyword id="KW-0133">Cell shape</keyword>
<keyword id="KW-0342">GTP-binding</keyword>
<keyword id="KW-0378">Hydrolase</keyword>
<keyword id="KW-0449">Lipoprotein</keyword>
<keyword id="KW-0472">Membrane</keyword>
<keyword id="KW-0488">Methylation</keyword>
<keyword id="KW-0547">Nucleotide-binding</keyword>
<keyword id="KW-0636">Prenylation</keyword>
<keyword id="KW-1185">Reference proteome</keyword>
<gene>
    <name type="primary">ras1</name>
    <name type="ORF">SPAC17H9.09c</name>
</gene>
<organism>
    <name type="scientific">Schizosaccharomyces pombe (strain 972 / ATCC 24843)</name>
    <name type="common">Fission yeast</name>
    <dbReference type="NCBI Taxonomy" id="284812"/>
    <lineage>
        <taxon>Eukaryota</taxon>
        <taxon>Fungi</taxon>
        <taxon>Dikarya</taxon>
        <taxon>Ascomycota</taxon>
        <taxon>Taphrinomycotina</taxon>
        <taxon>Schizosaccharomycetes</taxon>
        <taxon>Schizosaccharomycetales</taxon>
        <taxon>Schizosaccharomycetaceae</taxon>
        <taxon>Schizosaccharomyces</taxon>
    </lineage>
</organism>
<comment type="function">
    <text>Participates in the process of sexual differentiation and the determination of cell shape. Essential for mating and for recognition of the mating pheromone, but not for vegetative growth. Does not regulate the intracellular cAMP level. Regulates two downstream pathways, namely the byr2/byr1/spk1 mitogen-activated protein kinase cascade and the cdc42 small G protein pathway. The former is relevant to mating and sporulation, whereas the latter is relevant to mating, cell growth and cell morphology.</text>
</comment>
<comment type="catalytic activity">
    <reaction evidence="2">
        <text>GTP + H2O = GDP + phosphate + H(+)</text>
        <dbReference type="Rhea" id="RHEA:19669"/>
        <dbReference type="ChEBI" id="CHEBI:15377"/>
        <dbReference type="ChEBI" id="CHEBI:15378"/>
        <dbReference type="ChEBI" id="CHEBI:37565"/>
        <dbReference type="ChEBI" id="CHEBI:43474"/>
        <dbReference type="ChEBI" id="CHEBI:58189"/>
        <dbReference type="EC" id="3.6.5.2"/>
    </reaction>
</comment>
<comment type="activity regulation">
    <text>Alternates between an inactive form bound to GDP and an active form bound to GTP. Activated by a guanine nucleotide-exchange factor (GEF) and inactivated by a GTPase-activating protein (GAP).</text>
</comment>
<comment type="subunit">
    <text>Scd1, scd2, cdc42, and ras1, in its GTP-bound state, act cooperatively to form a protein complex.</text>
</comment>
<comment type="interaction">
    <interactant intactId="EBI-15585264">
        <id>P08647</id>
    </interactant>
    <interactant intactId="EBI-1032333">
        <id>P28829</id>
        <label>byr2</label>
    </interactant>
    <organismsDiffer>false</organismsDiffer>
    <experiments>2</experiments>
</comment>
<comment type="subcellular location">
    <subcellularLocation>
        <location evidence="4">Cell membrane</location>
        <topology evidence="4">Lipid-anchor</topology>
        <orientation evidence="4">Cytoplasmic side</orientation>
    </subcellularLocation>
</comment>
<comment type="PTM">
    <text evidence="3">Palmitoylated by the erf2-erf4 complex.</text>
</comment>
<comment type="similarity">
    <text evidence="4">Belongs to the small GTPase superfamily. Ras family.</text>
</comment>
<dbReference type="EC" id="3.6.5.2" evidence="2"/>
<dbReference type="EMBL" id="X02331">
    <property type="protein sequence ID" value="CAA26191.1"/>
    <property type="molecule type" value="Genomic_DNA"/>
</dbReference>
<dbReference type="EMBL" id="X03771">
    <property type="protein sequence ID" value="CAA27399.1"/>
    <property type="molecule type" value="Genomic_DNA"/>
</dbReference>
<dbReference type="EMBL" id="CU329670">
    <property type="protein sequence ID" value="CAB11218.1"/>
    <property type="molecule type" value="Genomic_DNA"/>
</dbReference>
<dbReference type="PIR" id="A22715">
    <property type="entry name" value="TVBYSR"/>
</dbReference>
<dbReference type="PIR" id="T37875">
    <property type="entry name" value="TVBYPR"/>
</dbReference>
<dbReference type="PIR" id="T45545">
    <property type="entry name" value="T45545"/>
</dbReference>
<dbReference type="RefSeq" id="NP_593579.1">
    <property type="nucleotide sequence ID" value="NM_001019011.2"/>
</dbReference>
<dbReference type="SMR" id="P08647"/>
<dbReference type="BioGRID" id="278753">
    <property type="interactions" value="38"/>
</dbReference>
<dbReference type="DIP" id="DIP-61182N"/>
<dbReference type="FunCoup" id="P08647">
    <property type="interactions" value="309"/>
</dbReference>
<dbReference type="IntAct" id="P08647">
    <property type="interactions" value="2"/>
</dbReference>
<dbReference type="STRING" id="284812.P08647"/>
<dbReference type="iPTMnet" id="P08647"/>
<dbReference type="SwissPalm" id="P08647"/>
<dbReference type="PaxDb" id="4896-SPAC17H9.09c.1"/>
<dbReference type="EnsemblFungi" id="SPAC17H9.09c.1">
    <property type="protein sequence ID" value="SPAC17H9.09c.1:pep"/>
    <property type="gene ID" value="SPAC17H9.09c"/>
</dbReference>
<dbReference type="GeneID" id="2542285"/>
<dbReference type="KEGG" id="spo:2542285"/>
<dbReference type="PomBase" id="SPAC17H9.09c">
    <property type="gene designation" value="ras1"/>
</dbReference>
<dbReference type="VEuPathDB" id="FungiDB:SPAC17H9.09c"/>
<dbReference type="eggNOG" id="KOG0395">
    <property type="taxonomic scope" value="Eukaryota"/>
</dbReference>
<dbReference type="HOGENOM" id="CLU_041217_9_8_1"/>
<dbReference type="InParanoid" id="P08647"/>
<dbReference type="OMA" id="CCGGCVI"/>
<dbReference type="PhylomeDB" id="P08647"/>
<dbReference type="Reactome" id="R-SPO-9696273">
    <property type="pathway name" value="RND1 GTPase cycle"/>
</dbReference>
<dbReference type="PRO" id="PR:P08647"/>
<dbReference type="Proteomes" id="UP000002485">
    <property type="component" value="Chromosome I"/>
</dbReference>
<dbReference type="GO" id="GO:0071521">
    <property type="term" value="C:Cdc42 GTPase complex"/>
    <property type="evidence" value="ECO:0000304"/>
    <property type="project" value="PomBase"/>
</dbReference>
<dbReference type="GO" id="GO:0051285">
    <property type="term" value="C:cell cortex of cell tip"/>
    <property type="evidence" value="ECO:0000314"/>
    <property type="project" value="PomBase"/>
</dbReference>
<dbReference type="GO" id="GO:0032153">
    <property type="term" value="C:cell division site"/>
    <property type="evidence" value="ECO:0000314"/>
    <property type="project" value="PomBase"/>
</dbReference>
<dbReference type="GO" id="GO:0090726">
    <property type="term" value="C:cortical dynamic polarity patch"/>
    <property type="evidence" value="ECO:0000314"/>
    <property type="project" value="PomBase"/>
</dbReference>
<dbReference type="GO" id="GO:0005737">
    <property type="term" value="C:cytoplasm"/>
    <property type="evidence" value="ECO:0000314"/>
    <property type="project" value="PomBase"/>
</dbReference>
<dbReference type="GO" id="GO:0005829">
    <property type="term" value="C:cytosol"/>
    <property type="evidence" value="ECO:0007005"/>
    <property type="project" value="PomBase"/>
</dbReference>
<dbReference type="GO" id="GO:0000935">
    <property type="term" value="C:division septum"/>
    <property type="evidence" value="ECO:0000314"/>
    <property type="project" value="PomBase"/>
</dbReference>
<dbReference type="GO" id="GO:1990819">
    <property type="term" value="C:mating projection actin fusion focus"/>
    <property type="evidence" value="ECO:0000314"/>
    <property type="project" value="PomBase"/>
</dbReference>
<dbReference type="GO" id="GO:0005634">
    <property type="term" value="C:nucleus"/>
    <property type="evidence" value="ECO:0007005"/>
    <property type="project" value="PomBase"/>
</dbReference>
<dbReference type="GO" id="GO:0005886">
    <property type="term" value="C:plasma membrane"/>
    <property type="evidence" value="ECO:0000314"/>
    <property type="project" value="PomBase"/>
</dbReference>
<dbReference type="GO" id="GO:0002135">
    <property type="term" value="F:CTP binding"/>
    <property type="evidence" value="ECO:0000314"/>
    <property type="project" value="PomBase"/>
</dbReference>
<dbReference type="GO" id="GO:0003925">
    <property type="term" value="F:G protein activity"/>
    <property type="evidence" value="ECO:0007669"/>
    <property type="project" value="UniProtKB-EC"/>
</dbReference>
<dbReference type="GO" id="GO:0019003">
    <property type="term" value="F:GDP binding"/>
    <property type="evidence" value="ECO:0000314"/>
    <property type="project" value="PomBase"/>
</dbReference>
<dbReference type="GO" id="GO:0005525">
    <property type="term" value="F:GTP binding"/>
    <property type="evidence" value="ECO:0000314"/>
    <property type="project" value="PomBase"/>
</dbReference>
<dbReference type="GO" id="GO:0003924">
    <property type="term" value="F:GTPase activity"/>
    <property type="evidence" value="ECO:0000314"/>
    <property type="project" value="PomBase"/>
</dbReference>
<dbReference type="GO" id="GO:0043539">
    <property type="term" value="F:protein serine/threonine kinase activator activity"/>
    <property type="evidence" value="ECO:0000269"/>
    <property type="project" value="PomBase"/>
</dbReference>
<dbReference type="GO" id="GO:0002134">
    <property type="term" value="F:UTP binding"/>
    <property type="evidence" value="ECO:0000314"/>
    <property type="project" value="PomBase"/>
</dbReference>
<dbReference type="GO" id="GO:0000747">
    <property type="term" value="P:conjugation with cellular fusion"/>
    <property type="evidence" value="ECO:0000315"/>
    <property type="project" value="PomBase"/>
</dbReference>
<dbReference type="GO" id="GO:0030010">
    <property type="term" value="P:establishment of cell polarity"/>
    <property type="evidence" value="ECO:0000315"/>
    <property type="project" value="PomBase"/>
</dbReference>
<dbReference type="GO" id="GO:0007163">
    <property type="term" value="P:establishment or maintenance of cell polarity"/>
    <property type="evidence" value="ECO:0000316"/>
    <property type="project" value="PomBase"/>
</dbReference>
<dbReference type="GO" id="GO:0031139">
    <property type="term" value="P:positive regulation of conjugation with cellular fusion"/>
    <property type="evidence" value="ECO:0000315"/>
    <property type="project" value="PomBase"/>
</dbReference>
<dbReference type="GO" id="GO:1902917">
    <property type="term" value="P:positive regulation of mating projection assembly"/>
    <property type="evidence" value="ECO:0000315"/>
    <property type="project" value="PomBase"/>
</dbReference>
<dbReference type="GO" id="GO:0062038">
    <property type="term" value="P:positive regulation of pheromone response MAPK cascade"/>
    <property type="evidence" value="ECO:0000315"/>
    <property type="project" value="PomBase"/>
</dbReference>
<dbReference type="GO" id="GO:0042307">
    <property type="term" value="P:positive regulation of protein import into nucleus"/>
    <property type="evidence" value="ECO:0000315"/>
    <property type="project" value="PomBase"/>
</dbReference>
<dbReference type="GO" id="GO:0072659">
    <property type="term" value="P:protein localization to plasma membrane"/>
    <property type="evidence" value="ECO:0000315"/>
    <property type="project" value="PomBase"/>
</dbReference>
<dbReference type="GO" id="GO:0008360">
    <property type="term" value="P:regulation of cell shape"/>
    <property type="evidence" value="ECO:0007669"/>
    <property type="project" value="UniProtKB-KW"/>
</dbReference>
<dbReference type="GO" id="GO:0031137">
    <property type="term" value="P:regulation of conjugation with cellular fusion"/>
    <property type="evidence" value="ECO:0000315"/>
    <property type="project" value="PomBase"/>
</dbReference>
<dbReference type="GO" id="GO:0032005">
    <property type="term" value="P:signal transduction involved in positive regulation of conjugation with cellular fusion"/>
    <property type="evidence" value="ECO:0000315"/>
    <property type="project" value="PomBase"/>
</dbReference>
<dbReference type="CDD" id="cd04138">
    <property type="entry name" value="H_N_K_Ras_like"/>
    <property type="match status" value="1"/>
</dbReference>
<dbReference type="FunFam" id="3.40.50.300:FF:000080">
    <property type="entry name" value="Ras-like GTPase Ras1"/>
    <property type="match status" value="1"/>
</dbReference>
<dbReference type="Gene3D" id="3.40.50.300">
    <property type="entry name" value="P-loop containing nucleotide triphosphate hydrolases"/>
    <property type="match status" value="1"/>
</dbReference>
<dbReference type="InterPro" id="IPR027417">
    <property type="entry name" value="P-loop_NTPase"/>
</dbReference>
<dbReference type="InterPro" id="IPR005225">
    <property type="entry name" value="Small_GTP-bd"/>
</dbReference>
<dbReference type="InterPro" id="IPR001806">
    <property type="entry name" value="Small_GTPase"/>
</dbReference>
<dbReference type="InterPro" id="IPR020849">
    <property type="entry name" value="Small_GTPase_Ras-type"/>
</dbReference>
<dbReference type="NCBIfam" id="TIGR00231">
    <property type="entry name" value="small_GTP"/>
    <property type="match status" value="1"/>
</dbReference>
<dbReference type="PANTHER" id="PTHR24070">
    <property type="entry name" value="RAS, DI-RAS, AND RHEB FAMILY MEMBERS OF SMALL GTPASE SUPERFAMILY"/>
    <property type="match status" value="1"/>
</dbReference>
<dbReference type="Pfam" id="PF00071">
    <property type="entry name" value="Ras"/>
    <property type="match status" value="1"/>
</dbReference>
<dbReference type="PRINTS" id="PR00449">
    <property type="entry name" value="RASTRNSFRMNG"/>
</dbReference>
<dbReference type="SMART" id="SM00175">
    <property type="entry name" value="RAB"/>
    <property type="match status" value="1"/>
</dbReference>
<dbReference type="SMART" id="SM00176">
    <property type="entry name" value="RAN"/>
    <property type="match status" value="1"/>
</dbReference>
<dbReference type="SMART" id="SM00173">
    <property type="entry name" value="RAS"/>
    <property type="match status" value="1"/>
</dbReference>
<dbReference type="SMART" id="SM00174">
    <property type="entry name" value="RHO"/>
    <property type="match status" value="1"/>
</dbReference>
<dbReference type="SUPFAM" id="SSF52540">
    <property type="entry name" value="P-loop containing nucleoside triphosphate hydrolases"/>
    <property type="match status" value="1"/>
</dbReference>
<dbReference type="PROSITE" id="PS51421">
    <property type="entry name" value="RAS"/>
    <property type="match status" value="1"/>
</dbReference>